<accession>B9IVF3</accession>
<keyword id="KW-0004">4Fe-4S</keyword>
<keyword id="KW-0963">Cytoplasm</keyword>
<keyword id="KW-1015">Disulfide bond</keyword>
<keyword id="KW-0408">Iron</keyword>
<keyword id="KW-0411">Iron-sulfur</keyword>
<keyword id="KW-0479">Metal-binding</keyword>
<keyword id="KW-0489">Methyltransferase</keyword>
<keyword id="KW-0698">rRNA processing</keyword>
<keyword id="KW-0949">S-adenosyl-L-methionine</keyword>
<keyword id="KW-0808">Transferase</keyword>
<keyword id="KW-0819">tRNA processing</keyword>
<comment type="function">
    <text evidence="1">Specifically methylates position 2 of adenine 2503 in 23S rRNA and position 2 of adenine 37 in tRNAs.</text>
</comment>
<comment type="catalytic activity">
    <reaction evidence="1">
        <text>adenosine(2503) in 23S rRNA + 2 reduced [2Fe-2S]-[ferredoxin] + 2 S-adenosyl-L-methionine = 2-methyladenosine(2503) in 23S rRNA + 5'-deoxyadenosine + L-methionine + 2 oxidized [2Fe-2S]-[ferredoxin] + S-adenosyl-L-homocysteine</text>
        <dbReference type="Rhea" id="RHEA:42916"/>
        <dbReference type="Rhea" id="RHEA-COMP:10000"/>
        <dbReference type="Rhea" id="RHEA-COMP:10001"/>
        <dbReference type="Rhea" id="RHEA-COMP:10152"/>
        <dbReference type="Rhea" id="RHEA-COMP:10282"/>
        <dbReference type="ChEBI" id="CHEBI:17319"/>
        <dbReference type="ChEBI" id="CHEBI:33737"/>
        <dbReference type="ChEBI" id="CHEBI:33738"/>
        <dbReference type="ChEBI" id="CHEBI:57844"/>
        <dbReference type="ChEBI" id="CHEBI:57856"/>
        <dbReference type="ChEBI" id="CHEBI:59789"/>
        <dbReference type="ChEBI" id="CHEBI:74411"/>
        <dbReference type="ChEBI" id="CHEBI:74497"/>
        <dbReference type="EC" id="2.1.1.192"/>
    </reaction>
</comment>
<comment type="catalytic activity">
    <reaction evidence="1">
        <text>adenosine(37) in tRNA + 2 reduced [2Fe-2S]-[ferredoxin] + 2 S-adenosyl-L-methionine = 2-methyladenosine(37) in tRNA + 5'-deoxyadenosine + L-methionine + 2 oxidized [2Fe-2S]-[ferredoxin] + S-adenosyl-L-homocysteine</text>
        <dbReference type="Rhea" id="RHEA:43332"/>
        <dbReference type="Rhea" id="RHEA-COMP:10000"/>
        <dbReference type="Rhea" id="RHEA-COMP:10001"/>
        <dbReference type="Rhea" id="RHEA-COMP:10162"/>
        <dbReference type="Rhea" id="RHEA-COMP:10485"/>
        <dbReference type="ChEBI" id="CHEBI:17319"/>
        <dbReference type="ChEBI" id="CHEBI:33737"/>
        <dbReference type="ChEBI" id="CHEBI:33738"/>
        <dbReference type="ChEBI" id="CHEBI:57844"/>
        <dbReference type="ChEBI" id="CHEBI:57856"/>
        <dbReference type="ChEBI" id="CHEBI:59789"/>
        <dbReference type="ChEBI" id="CHEBI:74411"/>
        <dbReference type="ChEBI" id="CHEBI:74497"/>
        <dbReference type="EC" id="2.1.1.192"/>
    </reaction>
</comment>
<comment type="cofactor">
    <cofactor evidence="1">
        <name>[4Fe-4S] cluster</name>
        <dbReference type="ChEBI" id="CHEBI:49883"/>
    </cofactor>
    <text evidence="1">Binds 1 [4Fe-4S] cluster. The cluster is coordinated with 3 cysteines and an exchangeable S-adenosyl-L-methionine.</text>
</comment>
<comment type="subcellular location">
    <subcellularLocation>
        <location evidence="1">Cytoplasm</location>
    </subcellularLocation>
</comment>
<comment type="miscellaneous">
    <text evidence="1">Reaction proceeds by a ping-pong mechanism involving intermediate methylation of a conserved cysteine residue.</text>
</comment>
<comment type="similarity">
    <text evidence="1">Belongs to the radical SAM superfamily. RlmN family.</text>
</comment>
<gene>
    <name evidence="1" type="primary">rlmN</name>
    <name type="ordered locus">BCQ_3649</name>
</gene>
<feature type="chain" id="PRO_1000188552" description="Probable dual-specificity RNA methyltransferase RlmN">
    <location>
        <begin position="1"/>
        <end position="362"/>
    </location>
</feature>
<feature type="domain" description="Radical SAM core" evidence="2">
    <location>
        <begin position="111"/>
        <end position="344"/>
    </location>
</feature>
<feature type="active site" description="Proton acceptor" evidence="1">
    <location>
        <position position="105"/>
    </location>
</feature>
<feature type="active site" description="S-methylcysteine intermediate" evidence="1">
    <location>
        <position position="349"/>
    </location>
</feature>
<feature type="binding site" evidence="1">
    <location>
        <position position="125"/>
    </location>
    <ligand>
        <name>[4Fe-4S] cluster</name>
        <dbReference type="ChEBI" id="CHEBI:49883"/>
        <note>4Fe-4S-S-AdoMet</note>
    </ligand>
</feature>
<feature type="binding site" evidence="1">
    <location>
        <position position="129"/>
    </location>
    <ligand>
        <name>[4Fe-4S] cluster</name>
        <dbReference type="ChEBI" id="CHEBI:49883"/>
        <note>4Fe-4S-S-AdoMet</note>
    </ligand>
</feature>
<feature type="binding site" evidence="1">
    <location>
        <position position="132"/>
    </location>
    <ligand>
        <name>[4Fe-4S] cluster</name>
        <dbReference type="ChEBI" id="CHEBI:49883"/>
        <note>4Fe-4S-S-AdoMet</note>
    </ligand>
</feature>
<feature type="binding site" evidence="1">
    <location>
        <begin position="175"/>
        <end position="176"/>
    </location>
    <ligand>
        <name>S-adenosyl-L-methionine</name>
        <dbReference type="ChEBI" id="CHEBI:59789"/>
    </ligand>
</feature>
<feature type="binding site" evidence="1">
    <location>
        <position position="207"/>
    </location>
    <ligand>
        <name>S-adenosyl-L-methionine</name>
        <dbReference type="ChEBI" id="CHEBI:59789"/>
    </ligand>
</feature>
<feature type="binding site" evidence="1">
    <location>
        <begin position="230"/>
        <end position="232"/>
    </location>
    <ligand>
        <name>S-adenosyl-L-methionine</name>
        <dbReference type="ChEBI" id="CHEBI:59789"/>
    </ligand>
</feature>
<feature type="binding site" evidence="1">
    <location>
        <position position="306"/>
    </location>
    <ligand>
        <name>S-adenosyl-L-methionine</name>
        <dbReference type="ChEBI" id="CHEBI:59789"/>
    </ligand>
</feature>
<feature type="disulfide bond" description="(transient)" evidence="1">
    <location>
        <begin position="118"/>
        <end position="349"/>
    </location>
</feature>
<protein>
    <recommendedName>
        <fullName evidence="1">Probable dual-specificity RNA methyltransferase RlmN</fullName>
        <ecNumber evidence="1">2.1.1.192</ecNumber>
    </recommendedName>
    <alternativeName>
        <fullName evidence="1">23S rRNA (adenine(2503)-C(2))-methyltransferase</fullName>
    </alternativeName>
    <alternativeName>
        <fullName evidence="1">23S rRNA m2A2503 methyltransferase</fullName>
    </alternativeName>
    <alternativeName>
        <fullName evidence="1">Ribosomal RNA large subunit methyltransferase N</fullName>
    </alternativeName>
    <alternativeName>
        <fullName evidence="1">tRNA (adenine(37)-C(2))-methyltransferase</fullName>
    </alternativeName>
    <alternativeName>
        <fullName evidence="1">tRNA m2A37 methyltransferase</fullName>
    </alternativeName>
</protein>
<sequence length="362" mass="41553">METTVRKQKKNLETKKPSIYSLQLHEMQDWLKEQGEPKFRAGQIFDWLYKKRVKNYEDMSNLSKGLREKLSNSFDITTLNTLVKQTSSDGTIKFLFQLYDGYSIETVLMRHEYGNSICVTTQVGCRIGCTFCASTLGGLKRNLEAGEIVAQVVEVQRALDESEERVSSLVVMGIGEPFDNYDNLMGFLRIINHEKGLHIGARHMTVSTSGIIPKIYKFAEEDLQINFAISLHAPNSELRSKLMPINRAYKLPDLMEAIKYYVNRTGRRITFEYGLFGGENDQVEHAEELAALLKGVKCHVNLIPVNYVPERDYVRTPREQIFLFEKTLKDRGVNVTIRREQGHDIDAACGQLRAKERKEETR</sequence>
<proteinExistence type="inferred from homology"/>
<name>RLMN_BACCQ</name>
<evidence type="ECO:0000255" key="1">
    <source>
        <dbReference type="HAMAP-Rule" id="MF_01849"/>
    </source>
</evidence>
<evidence type="ECO:0000255" key="2">
    <source>
        <dbReference type="PROSITE-ProRule" id="PRU01266"/>
    </source>
</evidence>
<dbReference type="EC" id="2.1.1.192" evidence="1"/>
<dbReference type="EMBL" id="CP000227">
    <property type="protein sequence ID" value="ACM14077.1"/>
    <property type="molecule type" value="Genomic_DNA"/>
</dbReference>
<dbReference type="SMR" id="B9IVF3"/>
<dbReference type="KEGG" id="bcq:BCQ_3649"/>
<dbReference type="HOGENOM" id="CLU_029101_0_1_9"/>
<dbReference type="Proteomes" id="UP000000441">
    <property type="component" value="Chromosome"/>
</dbReference>
<dbReference type="GO" id="GO:0005737">
    <property type="term" value="C:cytoplasm"/>
    <property type="evidence" value="ECO:0007669"/>
    <property type="project" value="UniProtKB-SubCell"/>
</dbReference>
<dbReference type="GO" id="GO:0051539">
    <property type="term" value="F:4 iron, 4 sulfur cluster binding"/>
    <property type="evidence" value="ECO:0007669"/>
    <property type="project" value="UniProtKB-UniRule"/>
</dbReference>
<dbReference type="GO" id="GO:0046872">
    <property type="term" value="F:metal ion binding"/>
    <property type="evidence" value="ECO:0007669"/>
    <property type="project" value="UniProtKB-KW"/>
</dbReference>
<dbReference type="GO" id="GO:0070040">
    <property type="term" value="F:rRNA (adenine(2503)-C2-)-methyltransferase activity"/>
    <property type="evidence" value="ECO:0007669"/>
    <property type="project" value="UniProtKB-UniRule"/>
</dbReference>
<dbReference type="GO" id="GO:0019843">
    <property type="term" value="F:rRNA binding"/>
    <property type="evidence" value="ECO:0007669"/>
    <property type="project" value="UniProtKB-UniRule"/>
</dbReference>
<dbReference type="GO" id="GO:0002935">
    <property type="term" value="F:tRNA (adenine(37)-C2)-methyltransferase activity"/>
    <property type="evidence" value="ECO:0007669"/>
    <property type="project" value="UniProtKB-UniRule"/>
</dbReference>
<dbReference type="GO" id="GO:0000049">
    <property type="term" value="F:tRNA binding"/>
    <property type="evidence" value="ECO:0007669"/>
    <property type="project" value="UniProtKB-UniRule"/>
</dbReference>
<dbReference type="GO" id="GO:0070475">
    <property type="term" value="P:rRNA base methylation"/>
    <property type="evidence" value="ECO:0007669"/>
    <property type="project" value="UniProtKB-UniRule"/>
</dbReference>
<dbReference type="GO" id="GO:0030488">
    <property type="term" value="P:tRNA methylation"/>
    <property type="evidence" value="ECO:0007669"/>
    <property type="project" value="UniProtKB-UniRule"/>
</dbReference>
<dbReference type="CDD" id="cd01335">
    <property type="entry name" value="Radical_SAM"/>
    <property type="match status" value="1"/>
</dbReference>
<dbReference type="FunFam" id="1.10.150.530:FF:000002">
    <property type="entry name" value="Probable dual-specificity RNA methyltransferase RlmN"/>
    <property type="match status" value="1"/>
</dbReference>
<dbReference type="FunFam" id="3.20.20.70:FF:000014">
    <property type="entry name" value="Probable dual-specificity RNA methyltransferase RlmN"/>
    <property type="match status" value="1"/>
</dbReference>
<dbReference type="Gene3D" id="1.10.150.530">
    <property type="match status" value="1"/>
</dbReference>
<dbReference type="Gene3D" id="3.20.20.70">
    <property type="entry name" value="Aldolase class I"/>
    <property type="match status" value="1"/>
</dbReference>
<dbReference type="HAMAP" id="MF_01849">
    <property type="entry name" value="RNA_methyltr_RlmN"/>
    <property type="match status" value="1"/>
</dbReference>
<dbReference type="InterPro" id="IPR013785">
    <property type="entry name" value="Aldolase_TIM"/>
</dbReference>
<dbReference type="InterPro" id="IPR040072">
    <property type="entry name" value="Methyltransferase_A"/>
</dbReference>
<dbReference type="InterPro" id="IPR048641">
    <property type="entry name" value="RlmN_N"/>
</dbReference>
<dbReference type="InterPro" id="IPR027492">
    <property type="entry name" value="RNA_MTrfase_RlmN"/>
</dbReference>
<dbReference type="InterPro" id="IPR004383">
    <property type="entry name" value="rRNA_lsu_MTrfase_RlmN/Cfr"/>
</dbReference>
<dbReference type="InterPro" id="IPR007197">
    <property type="entry name" value="rSAM"/>
</dbReference>
<dbReference type="NCBIfam" id="TIGR00048">
    <property type="entry name" value="rRNA_mod_RlmN"/>
    <property type="match status" value="1"/>
</dbReference>
<dbReference type="PANTHER" id="PTHR30544">
    <property type="entry name" value="23S RRNA METHYLTRANSFERASE"/>
    <property type="match status" value="1"/>
</dbReference>
<dbReference type="PANTHER" id="PTHR30544:SF5">
    <property type="entry name" value="RADICAL SAM CORE DOMAIN-CONTAINING PROTEIN"/>
    <property type="match status" value="1"/>
</dbReference>
<dbReference type="Pfam" id="PF04055">
    <property type="entry name" value="Radical_SAM"/>
    <property type="match status" value="1"/>
</dbReference>
<dbReference type="Pfam" id="PF21016">
    <property type="entry name" value="RlmN_N"/>
    <property type="match status" value="1"/>
</dbReference>
<dbReference type="PIRSF" id="PIRSF006004">
    <property type="entry name" value="CHP00048"/>
    <property type="match status" value="1"/>
</dbReference>
<dbReference type="SFLD" id="SFLDF00275">
    <property type="entry name" value="adenosine_C2_methyltransferase"/>
    <property type="match status" value="1"/>
</dbReference>
<dbReference type="SFLD" id="SFLDS00029">
    <property type="entry name" value="Radical_SAM"/>
    <property type="match status" value="1"/>
</dbReference>
<dbReference type="SUPFAM" id="SSF102114">
    <property type="entry name" value="Radical SAM enzymes"/>
    <property type="match status" value="1"/>
</dbReference>
<dbReference type="PROSITE" id="PS51918">
    <property type="entry name" value="RADICAL_SAM"/>
    <property type="match status" value="1"/>
</dbReference>
<organism>
    <name type="scientific">Bacillus cereus (strain Q1)</name>
    <dbReference type="NCBI Taxonomy" id="361100"/>
    <lineage>
        <taxon>Bacteria</taxon>
        <taxon>Bacillati</taxon>
        <taxon>Bacillota</taxon>
        <taxon>Bacilli</taxon>
        <taxon>Bacillales</taxon>
        <taxon>Bacillaceae</taxon>
        <taxon>Bacillus</taxon>
        <taxon>Bacillus cereus group</taxon>
    </lineage>
</organism>
<reference key="1">
    <citation type="journal article" date="2009" name="J. Bacteriol.">
        <title>Complete genome sequence of the extremophilic Bacillus cereus strain Q1 with industrial applications.</title>
        <authorList>
            <person name="Xiong Z."/>
            <person name="Jiang Y."/>
            <person name="Qi D."/>
            <person name="Lu H."/>
            <person name="Yang F."/>
            <person name="Yang J."/>
            <person name="Chen L."/>
            <person name="Sun L."/>
            <person name="Xu X."/>
            <person name="Xue Y."/>
            <person name="Zhu Y."/>
            <person name="Jin Q."/>
        </authorList>
    </citation>
    <scope>NUCLEOTIDE SEQUENCE [LARGE SCALE GENOMIC DNA]</scope>
    <source>
        <strain>Q1</strain>
    </source>
</reference>